<sequence length="184" mass="20556">MESFSSKSLALQAEKKLLSKMAGRSVAHLFIDETSSEVLDELYRVSKEYTHSRPQAQRVIKDLIKVAIKVAVLHRNGSFGPSELALATRFRQKLRQGAMTALSFGEVDFTFEAAVLAGLLTECRDVLLELVEHHLTPKSHGRIRHVFDHFSDPGLLTALYGPDFTQHLGKICDGLRKLLDEGKL</sequence>
<comment type="function">
    <text evidence="1 3 4 5">Acts as a negative regulator of innate and adaptive immunity by maintaining immune homeostasis (PubMed:27043859). Plays a regulatory role in the Toll-like signaling pathway by determining the strength of LPS-induced signaling and gene expression (PubMed:32188758). Inhibits TCR-mediated T-cell activation and negatively regulate T-cell function to prevent hyperresponsiveness (By similarity). Also inhibits autolysosome formation via negatively modulating MTOR activation by interacting with RAC1 and promoting the disassociation of the RAC1-MTOR complex (PubMed:32460619). Plays an essential role in NK-cell biology by acting as a checkpoint and displaying an expression pattern correlating with NK-cell maturation process and by negatively regulating NK-cell maturation and antitumor immunity (By similarity). Mechanistically, suppresses IL-15-triggered mTOR activity in NK-cells (By similarity).</text>
</comment>
<comment type="subunit">
    <text evidence="5">May interact with CASP8; however, such result is unclear since PubMed:19079267 could not reproduce the interaction with CASP8. Interacts with RAC1 (PubMed:32460619).</text>
</comment>
<comment type="interaction">
    <interactant intactId="EBI-9073209">
        <id>Q6P589</id>
    </interactant>
    <interactant intactId="EBI-413628">
        <id>P63000</id>
        <label>RAC1</label>
    </interactant>
    <organismsDiffer>false</organismsDiffer>
    <experiments>2</experiments>
</comment>
<comment type="interaction">
    <interactant intactId="EBI-9073209">
        <id>Q6P589</id>
    </interactant>
    <interactant intactId="EBI-7212896">
        <id>P63000-1</id>
        <label>RAC1</label>
    </interactant>
    <organismsDiffer>false</organismsDiffer>
    <experiments>6</experiments>
</comment>
<comment type="interaction">
    <interactant intactId="EBI-9073209">
        <id>Q6P589</id>
    </interactant>
    <interactant intactId="EBI-489652">
        <id>P15153</id>
        <label>RAC2</label>
    </interactant>
    <organismsDiffer>false</organismsDiffer>
    <experiments>2</experiments>
</comment>
<comment type="subcellular location">
    <subcellularLocation>
        <location evidence="2 3 5">Cytoplasm</location>
    </subcellularLocation>
    <subcellularLocation>
        <location evidence="2 3">Nucleus</location>
    </subcellularLocation>
    <subcellularLocation>
        <location evidence="5">Lysosome</location>
    </subcellularLocation>
</comment>
<comment type="tissue specificity">
    <text evidence="2">Expressed in T-cells, B-cells, macrophages, neurons in the brain and brainstem, and stratified squamous epithelia of the esophagus, cervix and skin.</text>
</comment>
<comment type="domain">
    <text>The central region was initially thought to constitute a DED (death effector) domain. However, 3D-structure data reveal a previously uncharacterized fold that is different from the predicted fold of a DED (death effector) domain. It consists of a large, hydrophobic central cavity that is poised for cofactor binding.</text>
</comment>
<comment type="PTM">
    <text evidence="4">Phosphorylated by TAK1/MAP3K7; this phosphorylation triggers association with BTRC and subsequent ubiquitination and degradation.</text>
</comment>
<comment type="PTM">
    <text evidence="4">Ubiquitinated in a BTRC-depdent manner; leading to degradation mediated through the proteasome pathway.</text>
</comment>
<comment type="similarity">
    <text evidence="6">Belongs to the TNFAIP8 family. TNFAIP8L2 subfamily.</text>
</comment>
<comment type="sequence caution" evidence="6">
    <conflict type="frameshift">
        <sequence resource="EMBL-CDS" id="AAG44785"/>
    </conflict>
</comment>
<organism>
    <name type="scientific">Homo sapiens</name>
    <name type="common">Human</name>
    <dbReference type="NCBI Taxonomy" id="9606"/>
    <lineage>
        <taxon>Eukaryota</taxon>
        <taxon>Metazoa</taxon>
        <taxon>Chordata</taxon>
        <taxon>Craniata</taxon>
        <taxon>Vertebrata</taxon>
        <taxon>Euteleostomi</taxon>
        <taxon>Mammalia</taxon>
        <taxon>Eutheria</taxon>
        <taxon>Euarchontoglires</taxon>
        <taxon>Primates</taxon>
        <taxon>Haplorrhini</taxon>
        <taxon>Catarrhini</taxon>
        <taxon>Hominidae</taxon>
        <taxon>Homo</taxon>
    </lineage>
</organism>
<keyword id="KW-0002">3D-structure</keyword>
<keyword id="KW-0963">Cytoplasm</keyword>
<keyword id="KW-0391">Immunity</keyword>
<keyword id="KW-0399">Innate immunity</keyword>
<keyword id="KW-0458">Lysosome</keyword>
<keyword id="KW-0539">Nucleus</keyword>
<keyword id="KW-0597">Phosphoprotein</keyword>
<keyword id="KW-1267">Proteomics identification</keyword>
<keyword id="KW-1185">Reference proteome</keyword>
<keyword id="KW-0832">Ubl conjugation</keyword>
<name>TP8L2_HUMAN</name>
<protein>
    <recommendedName>
        <fullName>Tumor necrosis factor alpha-induced protein 8-like protein 2</fullName>
        <shortName>TIPE2</shortName>
        <shortName>TNF alpha-induced protein 8-like protein 2</shortName>
        <shortName>TNFAIP8-like protein 2</shortName>
    </recommendedName>
    <alternativeName>
        <fullName>Inflammation factor protein 20</fullName>
    </alternativeName>
</protein>
<feature type="chain" id="PRO_0000285771" description="Tumor necrosis factor alpha-induced protein 8-like protein 2">
    <location>
        <begin position="1"/>
        <end position="184"/>
    </location>
</feature>
<feature type="modified residue" description="Phosphoserine; by MAP3K7" evidence="4">
    <location>
        <position position="3"/>
    </location>
</feature>
<feature type="mutagenesis site" description="Complete loss of interaction with BTRC." evidence="4">
    <original>S</original>
    <variation>A</variation>
    <location>
        <position position="3"/>
    </location>
</feature>
<feature type="sequence conflict" description="In Ref. 4; CAG33656." evidence="6" ref="4">
    <original>E</original>
    <variation>G</variation>
    <location>
        <position position="48"/>
    </location>
</feature>
<feature type="sequence conflict" description="In Ref. 3; BAB15664." evidence="6" ref="3">
    <original>S</original>
    <variation>T</variation>
    <location>
        <position position="103"/>
    </location>
</feature>
<feature type="helix" evidence="7">
    <location>
        <begin position="33"/>
        <end position="50"/>
    </location>
</feature>
<feature type="helix" evidence="7">
    <location>
        <begin position="53"/>
        <end position="75"/>
    </location>
</feature>
<feature type="helix" evidence="7">
    <location>
        <begin position="81"/>
        <end position="104"/>
    </location>
</feature>
<feature type="helix" evidence="7">
    <location>
        <begin position="113"/>
        <end position="131"/>
    </location>
</feature>
<feature type="turn" evidence="7">
    <location>
        <begin position="132"/>
        <end position="134"/>
    </location>
</feature>
<feature type="helix" evidence="7">
    <location>
        <begin position="137"/>
        <end position="150"/>
    </location>
</feature>
<feature type="helix" evidence="7">
    <location>
        <begin position="153"/>
        <end position="159"/>
    </location>
</feature>
<feature type="helix" evidence="7">
    <location>
        <begin position="162"/>
        <end position="164"/>
    </location>
</feature>
<feature type="helix" evidence="7">
    <location>
        <begin position="165"/>
        <end position="180"/>
    </location>
</feature>
<accession>Q6P589</accession>
<accession>Q6I9Y0</accession>
<accession>Q9H2H7</accession>
<accession>Q9H5G2</accession>
<gene>
    <name type="primary">TNFAIP8L2</name>
</gene>
<evidence type="ECO:0000250" key="1">
    <source>
        <dbReference type="UniProtKB" id="Q9D8Y7"/>
    </source>
</evidence>
<evidence type="ECO:0000269" key="2">
    <source>
    </source>
</evidence>
<evidence type="ECO:0000269" key="3">
    <source>
    </source>
</evidence>
<evidence type="ECO:0000269" key="4">
    <source>
    </source>
</evidence>
<evidence type="ECO:0000269" key="5">
    <source>
    </source>
</evidence>
<evidence type="ECO:0000305" key="6"/>
<evidence type="ECO:0007829" key="7">
    <source>
        <dbReference type="PDB" id="3F4M"/>
    </source>
</evidence>
<dbReference type="EMBL" id="AF548003">
    <property type="protein sequence ID" value="AAQ12262.1"/>
    <property type="molecule type" value="mRNA"/>
</dbReference>
<dbReference type="EMBL" id="AF271774">
    <property type="protein sequence ID" value="AAG44785.1"/>
    <property type="status" value="ALT_FRAME"/>
    <property type="molecule type" value="mRNA"/>
</dbReference>
<dbReference type="EMBL" id="AK027120">
    <property type="protein sequence ID" value="BAB15664.1"/>
    <property type="molecule type" value="mRNA"/>
</dbReference>
<dbReference type="EMBL" id="CR457375">
    <property type="protein sequence ID" value="CAG33656.1"/>
    <property type="molecule type" value="mRNA"/>
</dbReference>
<dbReference type="EMBL" id="AL833373">
    <property type="protein sequence ID" value="CAI46145.1"/>
    <property type="molecule type" value="mRNA"/>
</dbReference>
<dbReference type="EMBL" id="AL592424">
    <property type="status" value="NOT_ANNOTATED_CDS"/>
    <property type="molecule type" value="Genomic_DNA"/>
</dbReference>
<dbReference type="EMBL" id="BC063014">
    <property type="protein sequence ID" value="AAH63014.1"/>
    <property type="molecule type" value="mRNA"/>
</dbReference>
<dbReference type="CCDS" id="CCDS985.1"/>
<dbReference type="RefSeq" id="NP_078851.2">
    <property type="nucleotide sequence ID" value="NM_024575.5"/>
</dbReference>
<dbReference type="PDB" id="3F4M">
    <property type="method" value="X-ray"/>
    <property type="resolution" value="1.70 A"/>
    <property type="chains" value="A=24-184"/>
</dbReference>
<dbReference type="PDBsum" id="3F4M"/>
<dbReference type="SMR" id="Q6P589"/>
<dbReference type="BioGRID" id="122756">
    <property type="interactions" value="7"/>
</dbReference>
<dbReference type="DIP" id="DIP-60326N"/>
<dbReference type="FunCoup" id="Q6P589">
    <property type="interactions" value="514"/>
</dbReference>
<dbReference type="IntAct" id="Q6P589">
    <property type="interactions" value="4"/>
</dbReference>
<dbReference type="STRING" id="9606.ENSP00000357906"/>
<dbReference type="iPTMnet" id="Q6P589"/>
<dbReference type="PhosphoSitePlus" id="Q6P589"/>
<dbReference type="BioMuta" id="TNFAIP8L2"/>
<dbReference type="DMDM" id="74749120"/>
<dbReference type="MassIVE" id="Q6P589"/>
<dbReference type="PaxDb" id="9606-ENSP00000357906"/>
<dbReference type="PeptideAtlas" id="Q6P589"/>
<dbReference type="ProteomicsDB" id="66994"/>
<dbReference type="Antibodypedia" id="34053">
    <property type="antibodies" value="156 antibodies from 26 providers"/>
</dbReference>
<dbReference type="DNASU" id="79626"/>
<dbReference type="Ensembl" id="ENST00000368910.4">
    <property type="protein sequence ID" value="ENSP00000357906.3"/>
    <property type="gene ID" value="ENSG00000163154.6"/>
</dbReference>
<dbReference type="GeneID" id="79626"/>
<dbReference type="KEGG" id="hsa:79626"/>
<dbReference type="MANE-Select" id="ENST00000368910.4">
    <property type="protein sequence ID" value="ENSP00000357906.3"/>
    <property type="RefSeq nucleotide sequence ID" value="NM_024575.5"/>
    <property type="RefSeq protein sequence ID" value="NP_078851.2"/>
</dbReference>
<dbReference type="UCSC" id="uc001ewx.2">
    <property type="organism name" value="human"/>
</dbReference>
<dbReference type="AGR" id="HGNC:26277"/>
<dbReference type="CTD" id="79626"/>
<dbReference type="DisGeNET" id="79626"/>
<dbReference type="GeneCards" id="TNFAIP8L2"/>
<dbReference type="HGNC" id="HGNC:26277">
    <property type="gene designation" value="TNFAIP8L2"/>
</dbReference>
<dbReference type="HPA" id="ENSG00000163154">
    <property type="expression patterns" value="Tissue enhanced (lymphoid)"/>
</dbReference>
<dbReference type="MIM" id="612112">
    <property type="type" value="gene"/>
</dbReference>
<dbReference type="neXtProt" id="NX_Q6P589"/>
<dbReference type="OpenTargets" id="ENSG00000163154"/>
<dbReference type="PharmGKB" id="PA142670723"/>
<dbReference type="VEuPathDB" id="HostDB:ENSG00000163154"/>
<dbReference type="eggNOG" id="ENOG502QST4">
    <property type="taxonomic scope" value="Eukaryota"/>
</dbReference>
<dbReference type="GeneTree" id="ENSGT00390000003488"/>
<dbReference type="HOGENOM" id="CLU_085918_1_0_1"/>
<dbReference type="InParanoid" id="Q6P589"/>
<dbReference type="OMA" id="IRRVFDH"/>
<dbReference type="OrthoDB" id="10055976at2759"/>
<dbReference type="PAN-GO" id="Q6P589">
    <property type="GO annotations" value="3 GO annotations based on evolutionary models"/>
</dbReference>
<dbReference type="PhylomeDB" id="Q6P589"/>
<dbReference type="TreeFam" id="TF323415"/>
<dbReference type="PathwayCommons" id="Q6P589"/>
<dbReference type="Reactome" id="R-HSA-1483255">
    <property type="pathway name" value="PI Metabolism"/>
</dbReference>
<dbReference type="SignaLink" id="Q6P589"/>
<dbReference type="SIGNOR" id="Q6P589"/>
<dbReference type="BioGRID-ORCS" id="79626">
    <property type="hits" value="17 hits in 1132 CRISPR screens"/>
</dbReference>
<dbReference type="EvolutionaryTrace" id="Q6P589"/>
<dbReference type="GenomeRNAi" id="79626"/>
<dbReference type="Pharos" id="Q6P589">
    <property type="development level" value="Tbio"/>
</dbReference>
<dbReference type="PRO" id="PR:Q6P589"/>
<dbReference type="Proteomes" id="UP000005640">
    <property type="component" value="Chromosome 1"/>
</dbReference>
<dbReference type="RNAct" id="Q6P589">
    <property type="molecule type" value="protein"/>
</dbReference>
<dbReference type="Bgee" id="ENSG00000163154">
    <property type="expression patterns" value="Expressed in granulocyte and 110 other cell types or tissues"/>
</dbReference>
<dbReference type="GO" id="GO:0005737">
    <property type="term" value="C:cytoplasm"/>
    <property type="evidence" value="ECO:0000318"/>
    <property type="project" value="GO_Central"/>
</dbReference>
<dbReference type="GO" id="GO:0005764">
    <property type="term" value="C:lysosome"/>
    <property type="evidence" value="ECO:0007669"/>
    <property type="project" value="UniProtKB-SubCell"/>
</dbReference>
<dbReference type="GO" id="GO:0005634">
    <property type="term" value="C:nucleus"/>
    <property type="evidence" value="ECO:0007669"/>
    <property type="project" value="UniProtKB-SubCell"/>
</dbReference>
<dbReference type="GO" id="GO:0045087">
    <property type="term" value="P:innate immune response"/>
    <property type="evidence" value="ECO:0007669"/>
    <property type="project" value="UniProtKB-KW"/>
</dbReference>
<dbReference type="GO" id="GO:0050728">
    <property type="term" value="P:negative regulation of inflammatory response"/>
    <property type="evidence" value="ECO:0000318"/>
    <property type="project" value="GO_Central"/>
</dbReference>
<dbReference type="GO" id="GO:0050868">
    <property type="term" value="P:negative regulation of T cell activation"/>
    <property type="evidence" value="ECO:0000318"/>
    <property type="project" value="GO_Central"/>
</dbReference>
<dbReference type="GO" id="GO:0042981">
    <property type="term" value="P:regulation of apoptotic process"/>
    <property type="evidence" value="ECO:0007669"/>
    <property type="project" value="InterPro"/>
</dbReference>
<dbReference type="GO" id="GO:0042110">
    <property type="term" value="P:T cell activation"/>
    <property type="evidence" value="ECO:0007669"/>
    <property type="project" value="Ensembl"/>
</dbReference>
<dbReference type="FunFam" id="1.20.1440.160:FF:000001">
    <property type="entry name" value="Tumor necrosis factor alpha-induced protein 8-like 1"/>
    <property type="match status" value="1"/>
</dbReference>
<dbReference type="Gene3D" id="1.20.1440.160">
    <property type="entry name" value="Tumor necrosis factor alpha-induced protein 8-like"/>
    <property type="match status" value="1"/>
</dbReference>
<dbReference type="InterPro" id="IPR008477">
    <property type="entry name" value="TNFAIP8-like"/>
</dbReference>
<dbReference type="InterPro" id="IPR038355">
    <property type="entry name" value="TNFAIP8_sf"/>
</dbReference>
<dbReference type="PANTHER" id="PTHR12757:SF4">
    <property type="entry name" value="TUMOR NECROSIS FACTOR ALPHA-INDUCED PROTEIN 8-LIKE PROTEIN 2"/>
    <property type="match status" value="1"/>
</dbReference>
<dbReference type="PANTHER" id="PTHR12757">
    <property type="entry name" value="TUMOR NECROSIS FACTOR INDUCED PROTEIN"/>
    <property type="match status" value="1"/>
</dbReference>
<dbReference type="Pfam" id="PF05527">
    <property type="entry name" value="DUF758"/>
    <property type="match status" value="1"/>
</dbReference>
<proteinExistence type="evidence at protein level"/>
<reference key="1">
    <citation type="journal article" date="2008" name="Cell">
        <title>TIPE2, a negative regulator of innate and adaptive immunity that maintains immune homeostasis.</title>
        <authorList>
            <person name="Sun H."/>
            <person name="Gong S."/>
            <person name="Carmody R.J."/>
            <person name="Hilliard A."/>
            <person name="Li L."/>
            <person name="Sun J."/>
            <person name="Kong L."/>
            <person name="Xu L."/>
            <person name="Hilliard B."/>
            <person name="Hu S."/>
            <person name="Shen H."/>
            <person name="Yang X."/>
            <person name="Chen Y.H."/>
        </authorList>
    </citation>
    <scope>NUCLEOTIDE SEQUENCE [MRNA]</scope>
</reference>
<reference key="2">
    <citation type="submission" date="2000-05" db="EMBL/GenBank/DDBJ databases">
        <authorList>
            <person name="Xu X."/>
            <person name="Yang Y."/>
            <person name="Gao G."/>
            <person name="Xiao H."/>
            <person name="Chen Z."/>
            <person name="Han Z."/>
        </authorList>
    </citation>
    <scope>NUCLEOTIDE SEQUENCE [MRNA]</scope>
</reference>
<reference key="3">
    <citation type="journal article" date="2004" name="Nat. Genet.">
        <title>Complete sequencing and characterization of 21,243 full-length human cDNAs.</title>
        <authorList>
            <person name="Ota T."/>
            <person name="Suzuki Y."/>
            <person name="Nishikawa T."/>
            <person name="Otsuki T."/>
            <person name="Sugiyama T."/>
            <person name="Irie R."/>
            <person name="Wakamatsu A."/>
            <person name="Hayashi K."/>
            <person name="Sato H."/>
            <person name="Nagai K."/>
            <person name="Kimura K."/>
            <person name="Makita H."/>
            <person name="Sekine M."/>
            <person name="Obayashi M."/>
            <person name="Nishi T."/>
            <person name="Shibahara T."/>
            <person name="Tanaka T."/>
            <person name="Ishii S."/>
            <person name="Yamamoto J."/>
            <person name="Saito K."/>
            <person name="Kawai Y."/>
            <person name="Isono Y."/>
            <person name="Nakamura Y."/>
            <person name="Nagahari K."/>
            <person name="Murakami K."/>
            <person name="Yasuda T."/>
            <person name="Iwayanagi T."/>
            <person name="Wagatsuma M."/>
            <person name="Shiratori A."/>
            <person name="Sudo H."/>
            <person name="Hosoiri T."/>
            <person name="Kaku Y."/>
            <person name="Kodaira H."/>
            <person name="Kondo H."/>
            <person name="Sugawara M."/>
            <person name="Takahashi M."/>
            <person name="Kanda K."/>
            <person name="Yokoi T."/>
            <person name="Furuya T."/>
            <person name="Kikkawa E."/>
            <person name="Omura Y."/>
            <person name="Abe K."/>
            <person name="Kamihara K."/>
            <person name="Katsuta N."/>
            <person name="Sato K."/>
            <person name="Tanikawa M."/>
            <person name="Yamazaki M."/>
            <person name="Ninomiya K."/>
            <person name="Ishibashi T."/>
            <person name="Yamashita H."/>
            <person name="Murakawa K."/>
            <person name="Fujimori K."/>
            <person name="Tanai H."/>
            <person name="Kimata M."/>
            <person name="Watanabe M."/>
            <person name="Hiraoka S."/>
            <person name="Chiba Y."/>
            <person name="Ishida S."/>
            <person name="Ono Y."/>
            <person name="Takiguchi S."/>
            <person name="Watanabe S."/>
            <person name="Yosida M."/>
            <person name="Hotuta T."/>
            <person name="Kusano J."/>
            <person name="Kanehori K."/>
            <person name="Takahashi-Fujii A."/>
            <person name="Hara H."/>
            <person name="Tanase T.-O."/>
            <person name="Nomura Y."/>
            <person name="Togiya S."/>
            <person name="Komai F."/>
            <person name="Hara R."/>
            <person name="Takeuchi K."/>
            <person name="Arita M."/>
            <person name="Imose N."/>
            <person name="Musashino K."/>
            <person name="Yuuki H."/>
            <person name="Oshima A."/>
            <person name="Sasaki N."/>
            <person name="Aotsuka S."/>
            <person name="Yoshikawa Y."/>
            <person name="Matsunawa H."/>
            <person name="Ichihara T."/>
            <person name="Shiohata N."/>
            <person name="Sano S."/>
            <person name="Moriya S."/>
            <person name="Momiyama H."/>
            <person name="Satoh N."/>
            <person name="Takami S."/>
            <person name="Terashima Y."/>
            <person name="Suzuki O."/>
            <person name="Nakagawa S."/>
            <person name="Senoh A."/>
            <person name="Mizoguchi H."/>
            <person name="Goto Y."/>
            <person name="Shimizu F."/>
            <person name="Wakebe H."/>
            <person name="Hishigaki H."/>
            <person name="Watanabe T."/>
            <person name="Sugiyama A."/>
            <person name="Takemoto M."/>
            <person name="Kawakami B."/>
            <person name="Yamazaki M."/>
            <person name="Watanabe K."/>
            <person name="Kumagai A."/>
            <person name="Itakura S."/>
            <person name="Fukuzumi Y."/>
            <person name="Fujimori Y."/>
            <person name="Komiyama M."/>
            <person name="Tashiro H."/>
            <person name="Tanigami A."/>
            <person name="Fujiwara T."/>
            <person name="Ono T."/>
            <person name="Yamada K."/>
            <person name="Fujii Y."/>
            <person name="Ozaki K."/>
            <person name="Hirao M."/>
            <person name="Ohmori Y."/>
            <person name="Kawabata A."/>
            <person name="Hikiji T."/>
            <person name="Kobatake N."/>
            <person name="Inagaki H."/>
            <person name="Ikema Y."/>
            <person name="Okamoto S."/>
            <person name="Okitani R."/>
            <person name="Kawakami T."/>
            <person name="Noguchi S."/>
            <person name="Itoh T."/>
            <person name="Shigeta K."/>
            <person name="Senba T."/>
            <person name="Matsumura K."/>
            <person name="Nakajima Y."/>
            <person name="Mizuno T."/>
            <person name="Morinaga M."/>
            <person name="Sasaki M."/>
            <person name="Togashi T."/>
            <person name="Oyama M."/>
            <person name="Hata H."/>
            <person name="Watanabe M."/>
            <person name="Komatsu T."/>
            <person name="Mizushima-Sugano J."/>
            <person name="Satoh T."/>
            <person name="Shirai Y."/>
            <person name="Takahashi Y."/>
            <person name="Nakagawa K."/>
            <person name="Okumura K."/>
            <person name="Nagase T."/>
            <person name="Nomura N."/>
            <person name="Kikuchi H."/>
            <person name="Masuho Y."/>
            <person name="Yamashita R."/>
            <person name="Nakai K."/>
            <person name="Yada T."/>
            <person name="Nakamura Y."/>
            <person name="Ohara O."/>
            <person name="Isogai T."/>
            <person name="Sugano S."/>
        </authorList>
    </citation>
    <scope>NUCLEOTIDE SEQUENCE [LARGE SCALE MRNA]</scope>
    <source>
        <tissue>Small intestine</tissue>
    </source>
</reference>
<reference key="4">
    <citation type="submission" date="2004-06" db="EMBL/GenBank/DDBJ databases">
        <title>Cloning of human full open reading frames in Gateway(TM) system entry vector (pDONR201).</title>
        <authorList>
            <person name="Ebert L."/>
            <person name="Schick M."/>
            <person name="Neubert P."/>
            <person name="Schatten R."/>
            <person name="Henze S."/>
            <person name="Korn B."/>
        </authorList>
    </citation>
    <scope>NUCLEOTIDE SEQUENCE [LARGE SCALE MRNA]</scope>
</reference>
<reference key="5">
    <citation type="journal article" date="2007" name="BMC Genomics">
        <title>The full-ORF clone resource of the German cDNA consortium.</title>
        <authorList>
            <person name="Bechtel S."/>
            <person name="Rosenfelder H."/>
            <person name="Duda A."/>
            <person name="Schmidt C.P."/>
            <person name="Ernst U."/>
            <person name="Wellenreuther R."/>
            <person name="Mehrle A."/>
            <person name="Schuster C."/>
            <person name="Bahr A."/>
            <person name="Bloecker H."/>
            <person name="Heubner D."/>
            <person name="Hoerlein A."/>
            <person name="Michel G."/>
            <person name="Wedler H."/>
            <person name="Koehrer K."/>
            <person name="Ottenwaelder B."/>
            <person name="Poustka A."/>
            <person name="Wiemann S."/>
            <person name="Schupp I."/>
        </authorList>
    </citation>
    <scope>NUCLEOTIDE SEQUENCE [LARGE SCALE MRNA]</scope>
    <source>
        <tissue>Lymph node</tissue>
    </source>
</reference>
<reference key="6">
    <citation type="journal article" date="2006" name="Nature">
        <title>The DNA sequence and biological annotation of human chromosome 1.</title>
        <authorList>
            <person name="Gregory S.G."/>
            <person name="Barlow K.F."/>
            <person name="McLay K.E."/>
            <person name="Kaul R."/>
            <person name="Swarbreck D."/>
            <person name="Dunham A."/>
            <person name="Scott C.E."/>
            <person name="Howe K.L."/>
            <person name="Woodfine K."/>
            <person name="Spencer C.C.A."/>
            <person name="Jones M.C."/>
            <person name="Gillson C."/>
            <person name="Searle S."/>
            <person name="Zhou Y."/>
            <person name="Kokocinski F."/>
            <person name="McDonald L."/>
            <person name="Evans R."/>
            <person name="Phillips K."/>
            <person name="Atkinson A."/>
            <person name="Cooper R."/>
            <person name="Jones C."/>
            <person name="Hall R.E."/>
            <person name="Andrews T.D."/>
            <person name="Lloyd C."/>
            <person name="Ainscough R."/>
            <person name="Almeida J.P."/>
            <person name="Ambrose K.D."/>
            <person name="Anderson F."/>
            <person name="Andrew R.W."/>
            <person name="Ashwell R.I.S."/>
            <person name="Aubin K."/>
            <person name="Babbage A.K."/>
            <person name="Bagguley C.L."/>
            <person name="Bailey J."/>
            <person name="Beasley H."/>
            <person name="Bethel G."/>
            <person name="Bird C.P."/>
            <person name="Bray-Allen S."/>
            <person name="Brown J.Y."/>
            <person name="Brown A.J."/>
            <person name="Buckley D."/>
            <person name="Burton J."/>
            <person name="Bye J."/>
            <person name="Carder C."/>
            <person name="Chapman J.C."/>
            <person name="Clark S.Y."/>
            <person name="Clarke G."/>
            <person name="Clee C."/>
            <person name="Cobley V."/>
            <person name="Collier R.E."/>
            <person name="Corby N."/>
            <person name="Coville G.J."/>
            <person name="Davies J."/>
            <person name="Deadman R."/>
            <person name="Dunn M."/>
            <person name="Earthrowl M."/>
            <person name="Ellington A.G."/>
            <person name="Errington H."/>
            <person name="Frankish A."/>
            <person name="Frankland J."/>
            <person name="French L."/>
            <person name="Garner P."/>
            <person name="Garnett J."/>
            <person name="Gay L."/>
            <person name="Ghori M.R.J."/>
            <person name="Gibson R."/>
            <person name="Gilby L.M."/>
            <person name="Gillett W."/>
            <person name="Glithero R.J."/>
            <person name="Grafham D.V."/>
            <person name="Griffiths C."/>
            <person name="Griffiths-Jones S."/>
            <person name="Grocock R."/>
            <person name="Hammond S."/>
            <person name="Harrison E.S.I."/>
            <person name="Hart E."/>
            <person name="Haugen E."/>
            <person name="Heath P.D."/>
            <person name="Holmes S."/>
            <person name="Holt K."/>
            <person name="Howden P.J."/>
            <person name="Hunt A.R."/>
            <person name="Hunt S.E."/>
            <person name="Hunter G."/>
            <person name="Isherwood J."/>
            <person name="James R."/>
            <person name="Johnson C."/>
            <person name="Johnson D."/>
            <person name="Joy A."/>
            <person name="Kay M."/>
            <person name="Kershaw J.K."/>
            <person name="Kibukawa M."/>
            <person name="Kimberley A.M."/>
            <person name="King A."/>
            <person name="Knights A.J."/>
            <person name="Lad H."/>
            <person name="Laird G."/>
            <person name="Lawlor S."/>
            <person name="Leongamornlert D.A."/>
            <person name="Lloyd D.M."/>
            <person name="Loveland J."/>
            <person name="Lovell J."/>
            <person name="Lush M.J."/>
            <person name="Lyne R."/>
            <person name="Martin S."/>
            <person name="Mashreghi-Mohammadi M."/>
            <person name="Matthews L."/>
            <person name="Matthews N.S.W."/>
            <person name="McLaren S."/>
            <person name="Milne S."/>
            <person name="Mistry S."/>
            <person name="Moore M.J.F."/>
            <person name="Nickerson T."/>
            <person name="O'Dell C.N."/>
            <person name="Oliver K."/>
            <person name="Palmeiri A."/>
            <person name="Palmer S.A."/>
            <person name="Parker A."/>
            <person name="Patel D."/>
            <person name="Pearce A.V."/>
            <person name="Peck A.I."/>
            <person name="Pelan S."/>
            <person name="Phelps K."/>
            <person name="Phillimore B.J."/>
            <person name="Plumb R."/>
            <person name="Rajan J."/>
            <person name="Raymond C."/>
            <person name="Rouse G."/>
            <person name="Saenphimmachak C."/>
            <person name="Sehra H.K."/>
            <person name="Sheridan E."/>
            <person name="Shownkeen R."/>
            <person name="Sims S."/>
            <person name="Skuce C.D."/>
            <person name="Smith M."/>
            <person name="Steward C."/>
            <person name="Subramanian S."/>
            <person name="Sycamore N."/>
            <person name="Tracey A."/>
            <person name="Tromans A."/>
            <person name="Van Helmond Z."/>
            <person name="Wall M."/>
            <person name="Wallis J.M."/>
            <person name="White S."/>
            <person name="Whitehead S.L."/>
            <person name="Wilkinson J.E."/>
            <person name="Willey D.L."/>
            <person name="Williams H."/>
            <person name="Wilming L."/>
            <person name="Wray P.W."/>
            <person name="Wu Z."/>
            <person name="Coulson A."/>
            <person name="Vaudin M."/>
            <person name="Sulston J.E."/>
            <person name="Durbin R.M."/>
            <person name="Hubbard T."/>
            <person name="Wooster R."/>
            <person name="Dunham I."/>
            <person name="Carter N.P."/>
            <person name="McVean G."/>
            <person name="Ross M.T."/>
            <person name="Harrow J."/>
            <person name="Olson M.V."/>
            <person name="Beck S."/>
            <person name="Rogers J."/>
            <person name="Bentley D.R."/>
        </authorList>
    </citation>
    <scope>NUCLEOTIDE SEQUENCE [LARGE SCALE GENOMIC DNA]</scope>
</reference>
<reference key="7">
    <citation type="journal article" date="2004" name="Genome Res.">
        <title>The status, quality, and expansion of the NIH full-length cDNA project: the Mammalian Gene Collection (MGC).</title>
        <authorList>
            <consortium name="The MGC Project Team"/>
        </authorList>
    </citation>
    <scope>NUCLEOTIDE SEQUENCE [LARGE SCALE MRNA]</scope>
    <source>
        <tissue>Pancreas</tissue>
    </source>
</reference>
<reference key="8">
    <citation type="journal article" date="2011" name="Mol. Immunol.">
        <title>The unique expression profile of human TIPE2 suggests new functions beyond its role in immune regulation.</title>
        <authorList>
            <person name="Zhang L."/>
            <person name="Shi Y."/>
            <person name="Wang Y."/>
            <person name="Zhu F."/>
            <person name="Wang Q."/>
            <person name="Ma C."/>
            <person name="Chen Y.H."/>
            <person name="Zhang L."/>
        </authorList>
    </citation>
    <scope>TISSUE SPECIFICITY</scope>
    <scope>SUBCELLULAR LOCATION</scope>
</reference>
<reference key="9">
    <citation type="journal article" date="2016" name="Mol. Immunol.">
        <title>Anti-inflammatory TIPE2 inhibits angiogenic VEGF in retinal pigment epithelium.</title>
        <authorList>
            <person name="Suo L.G."/>
            <person name="Cui Y.Y."/>
            <person name="Bai Y."/>
            <person name="Qin X.J."/>
        </authorList>
    </citation>
    <scope>FUNCTION</scope>
    <scope>SUBCELLULAR LOCATION</scope>
</reference>
<reference key="10">
    <citation type="journal article" date="2020" name="J. Immunol.">
        <title>The SCFbeta-TrCP E3 Ubiquitin Ligase Regulates Immune Receptor Signaling by Targeting the Negative Regulatory Protein TIPE2.</title>
        <authorList>
            <person name="Lou Y."/>
            <person name="Han M."/>
            <person name="Song Y."/>
            <person name="Zhong J."/>
            <person name="Zhang W."/>
            <person name="Chen Y.H."/>
            <person name="Wang H."/>
        </authorList>
    </citation>
    <scope>FUNCTION</scope>
    <scope>UBIQUITINATION</scope>
    <scope>PHOSPHORYLATION AT SER-3</scope>
    <scope>MUTAGENESIS OF SER-3</scope>
</reference>
<reference key="11">
    <citation type="journal article" date="2021" name="Autophagy">
        <title>TNFAIP8L2/TIPE2 impairs autolysosome reformation via modulating the RAC1-MTORC1 axis.</title>
        <authorList>
            <person name="Li W."/>
            <person name="Li Y."/>
            <person name="Guan Y."/>
            <person name="Du Y."/>
            <person name="Zhao M."/>
            <person name="Chen X."/>
            <person name="Zhu F."/>
            <person name="Guo C."/>
            <person name="Jia Y."/>
            <person name="Li Y."/>
            <person name="Wang X."/>
            <person name="Wang X."/>
            <person name="Shi Y."/>
            <person name="Wang Q."/>
            <person name="Li Y."/>
            <person name="Zhang L."/>
        </authorList>
    </citation>
    <scope>FUNCTION</scope>
    <scope>SUBCELLULAR LOCATION</scope>
    <scope>INTERACTION WITH RAC1</scope>
</reference>
<reference key="12">
    <citation type="journal article" date="2009" name="Nat. Struct. Mol. Biol.">
        <title>Crystal structure of TIPE2 provides insights into immune homeostasis.</title>
        <authorList>
            <person name="Zhang X."/>
            <person name="Wang J."/>
            <person name="Fan C."/>
            <person name="Li H."/>
            <person name="Sun H."/>
            <person name="Gong S."/>
            <person name="Chen Y.H."/>
            <person name="Shi Y."/>
        </authorList>
    </citation>
    <scope>X-RAY CRYSTALLOGRAPHY (1.7 ANGSTROMS)</scope>
    <scope>LACK OF INTERACTION WITH CASP8</scope>
</reference>